<proteinExistence type="evidence at protein level"/>
<organism>
    <name type="scientific">Saccharomyces cerevisiae (strain ATCC 204508 / S288c)</name>
    <name type="common">Baker's yeast</name>
    <dbReference type="NCBI Taxonomy" id="559292"/>
    <lineage>
        <taxon>Eukaryota</taxon>
        <taxon>Fungi</taxon>
        <taxon>Dikarya</taxon>
        <taxon>Ascomycota</taxon>
        <taxon>Saccharomycotina</taxon>
        <taxon>Saccharomycetes</taxon>
        <taxon>Saccharomycetales</taxon>
        <taxon>Saccharomycetaceae</taxon>
        <taxon>Saccharomyces</taxon>
    </lineage>
</organism>
<comment type="function">
    <text evidence="4 5">Involved in ribosome biogenesis, probably through modulation of rDNA transcription.</text>
</comment>
<comment type="subcellular location">
    <subcellularLocation>
        <location evidence="2">Nucleus</location>
        <location evidence="2">Nucleolus</location>
    </subcellularLocation>
</comment>
<comment type="miscellaneous">
    <text evidence="3">Present with 3670 molecules/cell in log phase SD medium.</text>
</comment>
<comment type="similarity">
    <text evidence="6">Belongs to the RRT14 family.</text>
</comment>
<feature type="chain" id="PRO_0000202961" description="Regulator of rDNA transcription protein 14">
    <location>
        <begin position="1"/>
        <end position="206"/>
    </location>
</feature>
<feature type="region of interest" description="Disordered" evidence="1">
    <location>
        <begin position="178"/>
        <end position="206"/>
    </location>
</feature>
<feature type="compositionally biased region" description="Acidic residues" evidence="1">
    <location>
        <begin position="197"/>
        <end position="206"/>
    </location>
</feature>
<feature type="modified residue" description="Phosphoserine" evidence="7">
    <location>
        <position position="197"/>
    </location>
</feature>
<feature type="modified residue" description="Phosphoserine" evidence="7">
    <location>
        <position position="202"/>
    </location>
</feature>
<feature type="modified residue" description="Phosphoserine" evidence="7">
    <location>
        <position position="203"/>
    </location>
</feature>
<reference key="1">
    <citation type="journal article" date="1997" name="Nature">
        <title>The nucleotide sequence of Saccharomyces cerevisiae chromosome IX.</title>
        <authorList>
            <person name="Churcher C.M."/>
            <person name="Bowman S."/>
            <person name="Badcock K."/>
            <person name="Bankier A.T."/>
            <person name="Brown D."/>
            <person name="Chillingworth T."/>
            <person name="Connor R."/>
            <person name="Devlin K."/>
            <person name="Gentles S."/>
            <person name="Hamlin N."/>
            <person name="Harris D.E."/>
            <person name="Horsnell T."/>
            <person name="Hunt S."/>
            <person name="Jagels K."/>
            <person name="Jones M."/>
            <person name="Lye G."/>
            <person name="Moule S."/>
            <person name="Odell C."/>
            <person name="Pearson D."/>
            <person name="Rajandream M.A."/>
            <person name="Rice P."/>
            <person name="Rowley N."/>
            <person name="Skelton J."/>
            <person name="Smith V."/>
            <person name="Walsh S.V."/>
            <person name="Whitehead S."/>
            <person name="Barrell B.G."/>
        </authorList>
    </citation>
    <scope>NUCLEOTIDE SEQUENCE [LARGE SCALE GENOMIC DNA]</scope>
    <source>
        <strain>ATCC 204508 / S288c</strain>
    </source>
</reference>
<reference key="2">
    <citation type="journal article" date="2014" name="G3 (Bethesda)">
        <title>The reference genome sequence of Saccharomyces cerevisiae: Then and now.</title>
        <authorList>
            <person name="Engel S.R."/>
            <person name="Dietrich F.S."/>
            <person name="Fisk D.G."/>
            <person name="Binkley G."/>
            <person name="Balakrishnan R."/>
            <person name="Costanzo M.C."/>
            <person name="Dwight S.S."/>
            <person name="Hitz B.C."/>
            <person name="Karra K."/>
            <person name="Nash R.S."/>
            <person name="Weng S."/>
            <person name="Wong E.D."/>
            <person name="Lloyd P."/>
            <person name="Skrzypek M.S."/>
            <person name="Miyasato S.R."/>
            <person name="Simison M."/>
            <person name="Cherry J.M."/>
        </authorList>
    </citation>
    <scope>GENOME REANNOTATION</scope>
    <source>
        <strain>ATCC 204508 / S288c</strain>
    </source>
</reference>
<reference key="3">
    <citation type="journal article" date="2007" name="Genome Res.">
        <title>Approaching a complete repository of sequence-verified protein-encoding clones for Saccharomyces cerevisiae.</title>
        <authorList>
            <person name="Hu Y."/>
            <person name="Rolfs A."/>
            <person name="Bhullar B."/>
            <person name="Murthy T.V.S."/>
            <person name="Zhu C."/>
            <person name="Berger M.F."/>
            <person name="Camargo A.A."/>
            <person name="Kelley F."/>
            <person name="McCarron S."/>
            <person name="Jepson D."/>
            <person name="Richardson A."/>
            <person name="Raphael J."/>
            <person name="Moreira D."/>
            <person name="Taycher E."/>
            <person name="Zuo D."/>
            <person name="Mohr S."/>
            <person name="Kane M.F."/>
            <person name="Williamson J."/>
            <person name="Simpson A.J.G."/>
            <person name="Bulyk M.L."/>
            <person name="Harlow E."/>
            <person name="Marsischky G."/>
            <person name="Kolodner R.D."/>
            <person name="LaBaer J."/>
        </authorList>
    </citation>
    <scope>NUCLEOTIDE SEQUENCE [GENOMIC DNA]</scope>
    <source>
        <strain>ATCC 204508 / S288c</strain>
    </source>
</reference>
<reference key="4">
    <citation type="journal article" date="2003" name="Nature">
        <title>Global analysis of protein localization in budding yeast.</title>
        <authorList>
            <person name="Huh W.-K."/>
            <person name="Falvo J.V."/>
            <person name="Gerke L.C."/>
            <person name="Carroll A.S."/>
            <person name="Howson R.W."/>
            <person name="Weissman J.S."/>
            <person name="O'Shea E.K."/>
        </authorList>
    </citation>
    <scope>SUBCELLULAR LOCATION [LARGE SCALE ANALYSIS]</scope>
</reference>
<reference key="5">
    <citation type="journal article" date="2003" name="Nature">
        <title>Global analysis of protein expression in yeast.</title>
        <authorList>
            <person name="Ghaemmaghami S."/>
            <person name="Huh W.-K."/>
            <person name="Bower K."/>
            <person name="Howson R.W."/>
            <person name="Belle A."/>
            <person name="Dephoure N."/>
            <person name="O'Shea E.K."/>
            <person name="Weissman J.S."/>
        </authorList>
    </citation>
    <scope>LEVEL OF PROTEIN EXPRESSION [LARGE SCALE ANALYSIS]</scope>
</reference>
<reference key="6">
    <citation type="journal article" date="2006" name="Yeast">
        <title>The budding yeast rRNA and ribosome biosynthesis (RRB) regulon contains over 200 genes.</title>
        <authorList>
            <person name="Wade C.H."/>
            <person name="Umbarger M.A."/>
            <person name="McAlear M.A."/>
        </authorList>
    </citation>
    <scope>FUNCTION</scope>
</reference>
<reference key="7">
    <citation type="journal article" date="2009" name="Genetics">
        <title>Genetic identification of factors that modulate ribosomal DNA transcription in Saccharomyces cerevisiae.</title>
        <authorList>
            <person name="Hontz R.D."/>
            <person name="Niederer R.O."/>
            <person name="Johnson J.M."/>
            <person name="Smith J.S."/>
        </authorList>
    </citation>
    <scope>FUNCTION</scope>
</reference>
<reference key="8">
    <citation type="journal article" date="2009" name="Science">
        <title>Global analysis of Cdk1 substrate phosphorylation sites provides insights into evolution.</title>
        <authorList>
            <person name="Holt L.J."/>
            <person name="Tuch B.B."/>
            <person name="Villen J."/>
            <person name="Johnson A.D."/>
            <person name="Gygi S.P."/>
            <person name="Morgan D.O."/>
        </authorList>
    </citation>
    <scope>PHOSPHORYLATION [LARGE SCALE ANALYSIS] AT SER-197; SER-202 AND SER-203</scope>
    <scope>IDENTIFICATION BY MASS SPECTROMETRY [LARGE SCALE ANALYSIS]</scope>
</reference>
<dbReference type="EMBL" id="Z46833">
    <property type="protein sequence ID" value="CAA86865.1"/>
    <property type="molecule type" value="Genomic_DNA"/>
</dbReference>
<dbReference type="EMBL" id="AY557768">
    <property type="protein sequence ID" value="AAS56094.1"/>
    <property type="molecule type" value="Genomic_DNA"/>
</dbReference>
<dbReference type="EMBL" id="BK006942">
    <property type="protein sequence ID" value="DAA08426.1"/>
    <property type="molecule type" value="Genomic_DNA"/>
</dbReference>
<dbReference type="PIR" id="S49882">
    <property type="entry name" value="S49882"/>
</dbReference>
<dbReference type="RefSeq" id="NP_012139.1">
    <property type="nucleotide sequence ID" value="NM_001179475.1"/>
</dbReference>
<dbReference type="PDB" id="5WLC">
    <property type="method" value="EM"/>
    <property type="resolution" value="3.80 A"/>
    <property type="chains" value="SV=1-100, SV=178-206"/>
</dbReference>
<dbReference type="PDB" id="6LQP">
    <property type="method" value="EM"/>
    <property type="resolution" value="3.20 A"/>
    <property type="chains" value="RW=1-206"/>
</dbReference>
<dbReference type="PDB" id="6LQS">
    <property type="method" value="EM"/>
    <property type="resolution" value="3.80 A"/>
    <property type="chains" value="RW=1-206"/>
</dbReference>
<dbReference type="PDB" id="6LQU">
    <property type="method" value="EM"/>
    <property type="resolution" value="3.70 A"/>
    <property type="chains" value="RW=1-206"/>
</dbReference>
<dbReference type="PDB" id="6ZQA">
    <property type="method" value="EM"/>
    <property type="resolution" value="4.40 A"/>
    <property type="chains" value="JQ=1-206"/>
</dbReference>
<dbReference type="PDB" id="6ZQB">
    <property type="method" value="EM"/>
    <property type="resolution" value="3.90 A"/>
    <property type="chains" value="JQ=1-206"/>
</dbReference>
<dbReference type="PDB" id="6ZQC">
    <property type="method" value="EM"/>
    <property type="resolution" value="3.80 A"/>
    <property type="chains" value="JQ=1-206"/>
</dbReference>
<dbReference type="PDB" id="7AJT">
    <property type="method" value="EM"/>
    <property type="resolution" value="4.60 A"/>
    <property type="chains" value="JQ=1-206"/>
</dbReference>
<dbReference type="PDB" id="7D4I">
    <property type="method" value="EM"/>
    <property type="resolution" value="4.00 A"/>
    <property type="chains" value="RW=1-206"/>
</dbReference>
<dbReference type="PDB" id="7D5S">
    <property type="method" value="EM"/>
    <property type="resolution" value="4.60 A"/>
    <property type="chains" value="RW=1-206"/>
</dbReference>
<dbReference type="PDB" id="7SUK">
    <property type="method" value="EM"/>
    <property type="resolution" value="3.99 A"/>
    <property type="chains" value="SV=112-203"/>
</dbReference>
<dbReference type="PDBsum" id="5WLC"/>
<dbReference type="PDBsum" id="6LQP"/>
<dbReference type="PDBsum" id="6LQS"/>
<dbReference type="PDBsum" id="6LQU"/>
<dbReference type="PDBsum" id="6ZQA"/>
<dbReference type="PDBsum" id="6ZQB"/>
<dbReference type="PDBsum" id="6ZQC"/>
<dbReference type="PDBsum" id="7AJT"/>
<dbReference type="PDBsum" id="7D4I"/>
<dbReference type="PDBsum" id="7D5S"/>
<dbReference type="PDBsum" id="7SUK"/>
<dbReference type="EMDB" id="EMD-0949"/>
<dbReference type="EMDB" id="EMD-0952"/>
<dbReference type="EMDB" id="EMD-0954"/>
<dbReference type="EMDB" id="EMD-11357"/>
<dbReference type="EMDB" id="EMD-11358"/>
<dbReference type="EMDB" id="EMD-11359"/>
<dbReference type="EMDB" id="EMD-11807"/>
<dbReference type="EMDB" id="EMD-25441"/>
<dbReference type="EMDB" id="EMD-30574"/>
<dbReference type="EMDB" id="EMD-30584"/>
<dbReference type="SMR" id="P40470"/>
<dbReference type="BioGRID" id="34864">
    <property type="interactions" value="117"/>
</dbReference>
<dbReference type="FunCoup" id="P40470">
    <property type="interactions" value="323"/>
</dbReference>
<dbReference type="IntAct" id="P40470">
    <property type="interactions" value="68"/>
</dbReference>
<dbReference type="MINT" id="P40470"/>
<dbReference type="STRING" id="4932.YIL127C"/>
<dbReference type="iPTMnet" id="P40470"/>
<dbReference type="PaxDb" id="4932-YIL127C"/>
<dbReference type="PeptideAtlas" id="P40470"/>
<dbReference type="EnsemblFungi" id="YIL127C_mRNA">
    <property type="protein sequence ID" value="YIL127C"/>
    <property type="gene ID" value="YIL127C"/>
</dbReference>
<dbReference type="GeneID" id="854679"/>
<dbReference type="KEGG" id="sce:YIL127C"/>
<dbReference type="AGR" id="SGD:S000001389"/>
<dbReference type="SGD" id="S000001389">
    <property type="gene designation" value="RRT14"/>
</dbReference>
<dbReference type="VEuPathDB" id="FungiDB:YIL127C"/>
<dbReference type="eggNOG" id="ENOG502S1G1">
    <property type="taxonomic scope" value="Eukaryota"/>
</dbReference>
<dbReference type="HOGENOM" id="CLU_095038_0_0_1"/>
<dbReference type="InParanoid" id="P40470"/>
<dbReference type="OMA" id="LNNTKQV"/>
<dbReference type="OrthoDB" id="4069371at2759"/>
<dbReference type="BioCyc" id="YEAST:G3O-31378-MONOMER"/>
<dbReference type="BioGRID-ORCS" id="854679">
    <property type="hits" value="6 hits in 10 CRISPR screens"/>
</dbReference>
<dbReference type="PRO" id="PR:P40470"/>
<dbReference type="Proteomes" id="UP000002311">
    <property type="component" value="Chromosome IX"/>
</dbReference>
<dbReference type="RNAct" id="P40470">
    <property type="molecule type" value="protein"/>
</dbReference>
<dbReference type="GO" id="GO:0005730">
    <property type="term" value="C:nucleolus"/>
    <property type="evidence" value="ECO:0007005"/>
    <property type="project" value="SGD"/>
</dbReference>
<dbReference type="InterPro" id="IPR031404">
    <property type="entry name" value="Rrt14"/>
</dbReference>
<dbReference type="Pfam" id="PF17075">
    <property type="entry name" value="RRT14"/>
    <property type="match status" value="1"/>
</dbReference>
<evidence type="ECO:0000256" key="1">
    <source>
        <dbReference type="SAM" id="MobiDB-lite"/>
    </source>
</evidence>
<evidence type="ECO:0000269" key="2">
    <source>
    </source>
</evidence>
<evidence type="ECO:0000269" key="3">
    <source>
    </source>
</evidence>
<evidence type="ECO:0000269" key="4">
    <source>
    </source>
</evidence>
<evidence type="ECO:0000269" key="5">
    <source>
    </source>
</evidence>
<evidence type="ECO:0000305" key="6"/>
<evidence type="ECO:0007744" key="7">
    <source>
    </source>
</evidence>
<gene>
    <name type="primary">RRT14</name>
    <name type="ordered locus">YIL127C</name>
</gene>
<keyword id="KW-0002">3D-structure</keyword>
<keyword id="KW-0539">Nucleus</keyword>
<keyword id="KW-0597">Phosphoprotein</keyword>
<keyword id="KW-1185">Reference proteome</keyword>
<keyword id="KW-0804">Transcription</keyword>
<keyword id="KW-0805">Transcription regulation</keyword>
<name>RRT14_YEAST</name>
<sequence>MSSSLSQTSKYQATSVVNGLLSNLLPGVPKIRANNGKTSVNNGSKAQLIDRNLKKRVQLQNRDVHKIKKKCKLVKKKKVKKHKLDKEQLEQLAKHQVLKKHQHEGTLTDHERKYLNKLIKRNSQNLRSWDLEEEVRDELEDIQQSILKDTVSTANTDRSKRRRFKRKQFKEDIKESDFVKDHRYPGLTPGLAPVGLSDEEDSSEED</sequence>
<accession>P40470</accession>
<accession>D6VVG0</accession>
<protein>
    <recommendedName>
        <fullName>Regulator of rDNA transcription protein 14</fullName>
    </recommendedName>
</protein>